<accession>Q67W65</accession>
<organism>
    <name type="scientific">Oryza sativa subsp. japonica</name>
    <name type="common">Rice</name>
    <dbReference type="NCBI Taxonomy" id="39947"/>
    <lineage>
        <taxon>Eukaryota</taxon>
        <taxon>Viridiplantae</taxon>
        <taxon>Streptophyta</taxon>
        <taxon>Embryophyta</taxon>
        <taxon>Tracheophyta</taxon>
        <taxon>Spermatophyta</taxon>
        <taxon>Magnoliopsida</taxon>
        <taxon>Liliopsida</taxon>
        <taxon>Poales</taxon>
        <taxon>Poaceae</taxon>
        <taxon>BOP clade</taxon>
        <taxon>Oryzoideae</taxon>
        <taxon>Oryzeae</taxon>
        <taxon>Oryzinae</taxon>
        <taxon>Oryza</taxon>
        <taxon>Oryza sativa</taxon>
    </lineage>
</organism>
<sequence length="1810" mass="204275">MGDGERREDENPTTSAADDDDDEDYDEPGGGNHFLGFMFGNVDDSGDLDADYLDEDAKEHLFALADKLGPSLKDIDLIKPSAAPTDPSEQDYDAKAEDAVDYEDIDEEYDGPEVEAATEEDHLLSKKDYFSSNAVYASVNSKVSVFDEENYDEDEEPPNDNDLPSDNIVQNCTSASAEQLDMAPSNDNLAVEKMSSSLSEPEESFESEAFQKEMVAEEQLESKTATSLPVLCIEDGSVILKFSEIFGAQEPVRKAKMDRHKRPVNKELQITNFTDIVEEDEEVFLRSTIQNLSALKHIKTNDNFVESDSDESTSDVALRLKDSCLSEQPMKDKDIPTAVQSPVFPDFYPLEHENWENDIVWGNSPTTAIQPCLTSCAISKESLDDHNEDQAEGYVSGCWDVQNKFHSSSVMADPFGHTEIPDSTSYRSPENSYSPLRKETAQENNSLDEPNNITQPVKIDTTRHLNKLSLLNKELLEGSWLDNIVWDPSEDVPKPKLIFDLKDDHMLFEILDEKNGDHLRSHARAMIVTRPMKTSAVENVDHNNQAIALSGRFNISNDKFYSNRKMSQQARSHAKKRATMGLKLVHSVPAQKLQTMKPKLSIKEIANFHRPKAKWYPHENKLTARFQGDECSHGPMTAIVMTLGGKGVKFLVNAEETPLSVKSKASKKLEFKPSEKIKLFCSGKELQDDISLAMQNVRPNSILHVVRTEIHLWPKAQRLPGENKPLRPPGAFRKKSDLSVKDGHVFLMEYCEERPLLLANAGMAARLCTYYQKTSPSDQTATSLRSNSDGLGTMLAIDPADKSPFLGNIRSGSHQSCLETNMYRAPVFPHKVATTDYLLVRSPKGMLSLRRIDKLYAVGQQEPHMEVFSPGTKNMQNYILNRILVYVYREFRAREKPGIIPQIRADELPIQPPITEAIVRKRLKHCADLRKGPKGHLFYIQRPDFRIPSEEELRRLLTPENVCCYESMQAGQYRLKHLGIEKLTQPVGLASAMNQLPDEAIELAAAAHIERELQITSWNLTSNFVACTNQDKENIERLEITGVGDPSGRGLGFSYVRVTPKAPVSNSTHKKKSAAAKGTTVTGTDADLRRLSMDAARELLLKFGVPEEQIDKLTRWHRIAMVRKLSSEQAASGVTMDEIPVSKFARGQRMSFLQLQQQTKEKCQEIWDRQIQSLSAMDGNENGSDTEANSDLDSFAGDLENLLDAEEFDDEDVGNTDIRSDKMDGMRGLKMRRCHTQSQINEEIQDDVAEAALVEKLLEESDSDMKRKKQPVETTNYSTPMYNQGNKMKQGKAGQMIKSSVYAGALTPKESIPREAKEVENFAEGSLPSKLRTKTGFDANDDIILVKRKNIPGKDGFKEKRQGARGDTLVCGACGQLGHMRTNKLCPKYGEDPETSEMDVNSIRSHPPDIVSNAQIKTSNKRLVAKVSSEAFETEGPESIEKAKPVPVKFKCGAPEKSLDRNMSISASLVSDKRMMDATDSKSTGKVNKIKISNKIKYDDYPPDTPKPSVVIRPPAEVEKDLPRKKIIIKQPKVLGDQQRPTELRSGQEPRKTRKIVELSSFEKRDREDDNGFSGQPIQINSSHDRGWGLVGKRSKGIMESSESWRAFEEQRERQEQRLIEARIYDARREDELQKAKKKNKKKKKHEFRDDDLLDPRPYKNDRRVPERGRAAKRRTPADMTEYTPPAKRHRGGEVELSNILEKIVDHLRTMSCSFLFRKPVTKKEAPDYFDIIERPMDLGTIRDKVRKMEYKNREDFRHDVAQIALNAHTYNLNRHPHIPPLADELLELCDYLLEESADVLDDAEYAIED</sequence>
<gene>
    <name type="primary">TAF1</name>
    <name type="ordered locus">Os06g0645700</name>
    <name type="ordered locus">LOC_Os06g43790</name>
    <name type="ORF">OJ1226_A12.6</name>
    <name type="ORF">P0017B12.32</name>
</gene>
<reference key="1">
    <citation type="journal article" date="2005" name="Nature">
        <title>The map-based sequence of the rice genome.</title>
        <authorList>
            <consortium name="International rice genome sequencing project (IRGSP)"/>
        </authorList>
    </citation>
    <scope>NUCLEOTIDE SEQUENCE [LARGE SCALE GENOMIC DNA]</scope>
    <source>
        <strain>cv. Nipponbare</strain>
    </source>
</reference>
<reference key="2">
    <citation type="journal article" date="2013" name="Rice">
        <title>Improvement of the Oryza sativa Nipponbare reference genome using next generation sequence and optical map data.</title>
        <authorList>
            <person name="Kawahara Y."/>
            <person name="de la Bastide M."/>
            <person name="Hamilton J.P."/>
            <person name="Kanamori H."/>
            <person name="McCombie W.R."/>
            <person name="Ouyang S."/>
            <person name="Schwartz D.C."/>
            <person name="Tanaka T."/>
            <person name="Wu J."/>
            <person name="Zhou S."/>
            <person name="Childs K.L."/>
            <person name="Davidson R.M."/>
            <person name="Lin H."/>
            <person name="Quesada-Ocampo L."/>
            <person name="Vaillancourt B."/>
            <person name="Sakai H."/>
            <person name="Lee S.S."/>
            <person name="Kim J."/>
            <person name="Numa H."/>
            <person name="Itoh T."/>
            <person name="Buell C.R."/>
            <person name="Matsumoto T."/>
        </authorList>
    </citation>
    <scope>GENOME REANNOTATION</scope>
    <source>
        <strain>cv. Nipponbare</strain>
    </source>
</reference>
<reference key="3">
    <citation type="journal article" date="2003" name="Science">
        <title>Collection, mapping, and annotation of over 28,000 cDNA clones from japonica rice.</title>
        <authorList>
            <consortium name="The rice full-length cDNA consortium"/>
        </authorList>
    </citation>
    <scope>NUCLEOTIDE SEQUENCE [LARGE SCALE MRNA] OF 758-1637</scope>
    <source>
        <strain>cv. Nipponbare</strain>
    </source>
</reference>
<keyword id="KW-0010">Activator</keyword>
<keyword id="KW-0103">Bromodomain</keyword>
<keyword id="KW-0156">Chromatin regulator</keyword>
<keyword id="KW-0175">Coiled coil</keyword>
<keyword id="KW-0539">Nucleus</keyword>
<keyword id="KW-1185">Reference proteome</keyword>
<keyword id="KW-0804">Transcription</keyword>
<keyword id="KW-0805">Transcription regulation</keyword>
<protein>
    <recommendedName>
        <fullName>Transcription initiation factor TFIID subunit 1</fullName>
    </recommendedName>
    <alternativeName>
        <fullName>TAFII250</fullName>
    </alternativeName>
</protein>
<evidence type="ECO:0000250" key="1"/>
<evidence type="ECO:0000255" key="2"/>
<evidence type="ECO:0000255" key="3">
    <source>
        <dbReference type="PROSITE-ProRule" id="PRU00035"/>
    </source>
</evidence>
<evidence type="ECO:0000255" key="4">
    <source>
        <dbReference type="PROSITE-ProRule" id="PRU00214"/>
    </source>
</evidence>
<evidence type="ECO:0000256" key="5">
    <source>
        <dbReference type="SAM" id="MobiDB-lite"/>
    </source>
</evidence>
<evidence type="ECO:0000305" key="6"/>
<proteinExistence type="evidence at transcript level"/>
<comment type="function">
    <text evidence="1">Largest component and core scaffold of the TFIID basal transcription factor complex.</text>
</comment>
<comment type="subunit">
    <text evidence="1">TAF1 is the largest component of transcription factor TFIID that is composed of TBP and a variety of TBP-associated factors.</text>
</comment>
<comment type="subcellular location">
    <subcellularLocation>
        <location evidence="6">Nucleus</location>
    </subcellularLocation>
</comment>
<comment type="similarity">
    <text evidence="6">Belongs to the TAF1 family.</text>
</comment>
<comment type="sequence caution" evidence="6">
    <conflict type="frameshift">
        <sequence resource="EMBL" id="AK064421"/>
    </conflict>
</comment>
<name>TAF1_ORYSJ</name>
<feature type="chain" id="PRO_0000269755" description="Transcription initiation factor TFIID subunit 1">
    <location>
        <begin position="1"/>
        <end position="1810"/>
    </location>
</feature>
<feature type="domain" description="Ubiquitin-like" evidence="4">
    <location>
        <begin position="636"/>
        <end position="712"/>
    </location>
</feature>
<feature type="domain" description="Bromo" evidence="3">
    <location>
        <begin position="1688"/>
        <end position="1797"/>
    </location>
</feature>
<feature type="region of interest" description="Disordered" evidence="5">
    <location>
        <begin position="1"/>
        <end position="38"/>
    </location>
</feature>
<feature type="region of interest" description="Disordered" evidence="5">
    <location>
        <begin position="413"/>
        <end position="454"/>
    </location>
</feature>
<feature type="region of interest" description="Disordered" evidence="5">
    <location>
        <begin position="1261"/>
        <end position="1291"/>
    </location>
</feature>
<feature type="region of interest" description="Disordered" evidence="5">
    <location>
        <begin position="1493"/>
        <end position="1609"/>
    </location>
</feature>
<feature type="region of interest" description="Disordered" evidence="5">
    <location>
        <begin position="1632"/>
        <end position="1692"/>
    </location>
</feature>
<feature type="coiled-coil region" evidence="2">
    <location>
        <begin position="1240"/>
        <end position="1260"/>
    </location>
</feature>
<feature type="coiled-coil region" evidence="2">
    <location>
        <begin position="1627"/>
        <end position="1647"/>
    </location>
</feature>
<feature type="compositionally biased region" description="Basic and acidic residues" evidence="5">
    <location>
        <begin position="1"/>
        <end position="10"/>
    </location>
</feature>
<feature type="compositionally biased region" description="Acidic residues" evidence="5">
    <location>
        <begin position="17"/>
        <end position="27"/>
    </location>
</feature>
<feature type="compositionally biased region" description="Polar residues" evidence="5">
    <location>
        <begin position="421"/>
        <end position="434"/>
    </location>
</feature>
<feature type="compositionally biased region" description="Polar residues" evidence="5">
    <location>
        <begin position="442"/>
        <end position="454"/>
    </location>
</feature>
<feature type="compositionally biased region" description="Polar residues" evidence="5">
    <location>
        <begin position="1272"/>
        <end position="1287"/>
    </location>
</feature>
<feature type="compositionally biased region" description="Basic and acidic residues" evidence="5">
    <location>
        <begin position="1540"/>
        <end position="1570"/>
    </location>
</feature>
<feature type="compositionally biased region" description="Polar residues" evidence="5">
    <location>
        <begin position="1573"/>
        <end position="1582"/>
    </location>
</feature>
<feature type="compositionally biased region" description="Basic residues" evidence="5">
    <location>
        <begin position="1636"/>
        <end position="1646"/>
    </location>
</feature>
<feature type="compositionally biased region" description="Basic and acidic residues" evidence="5">
    <location>
        <begin position="1647"/>
        <end position="1670"/>
    </location>
</feature>
<dbReference type="EMBL" id="AP003568">
    <property type="protein sequence ID" value="BAD37451.1"/>
    <property type="molecule type" value="Genomic_DNA"/>
</dbReference>
<dbReference type="EMBL" id="AP004008">
    <property type="protein sequence ID" value="BAD37604.1"/>
    <property type="molecule type" value="Genomic_DNA"/>
</dbReference>
<dbReference type="EMBL" id="AP014962">
    <property type="status" value="NOT_ANNOTATED_CDS"/>
    <property type="molecule type" value="Genomic_DNA"/>
</dbReference>
<dbReference type="EMBL" id="AK064421">
    <property type="status" value="NOT_ANNOTATED_CDS"/>
    <property type="molecule type" value="mRNA"/>
</dbReference>
<dbReference type="SMR" id="Q67W65"/>
<dbReference type="FunCoup" id="Q67W65">
    <property type="interactions" value="1726"/>
</dbReference>
<dbReference type="STRING" id="39947.Q67W65"/>
<dbReference type="PaxDb" id="39947-Q67W65"/>
<dbReference type="GeneID" id="9266475"/>
<dbReference type="KEGG" id="osa:9266475"/>
<dbReference type="eggNOG" id="KOG0008">
    <property type="taxonomic scope" value="Eukaryota"/>
</dbReference>
<dbReference type="InParanoid" id="Q67W65"/>
<dbReference type="OrthoDB" id="21449at2759"/>
<dbReference type="Proteomes" id="UP000000763">
    <property type="component" value="Chromosome 6"/>
</dbReference>
<dbReference type="Proteomes" id="UP000059680">
    <property type="component" value="Chromosome 6"/>
</dbReference>
<dbReference type="GO" id="GO:0005669">
    <property type="term" value="C:transcription factor TFIID complex"/>
    <property type="evidence" value="ECO:0000318"/>
    <property type="project" value="GO_Central"/>
</dbReference>
<dbReference type="GO" id="GO:0004402">
    <property type="term" value="F:histone acetyltransferase activity"/>
    <property type="evidence" value="ECO:0007669"/>
    <property type="project" value="InterPro"/>
</dbReference>
<dbReference type="GO" id="GO:0016251">
    <property type="term" value="F:RNA polymerase II general transcription initiation factor activity"/>
    <property type="evidence" value="ECO:0000318"/>
    <property type="project" value="GO_Central"/>
</dbReference>
<dbReference type="GO" id="GO:0017025">
    <property type="term" value="F:TBP-class protein binding"/>
    <property type="evidence" value="ECO:0000318"/>
    <property type="project" value="GO_Central"/>
</dbReference>
<dbReference type="GO" id="GO:0051123">
    <property type="term" value="P:RNA polymerase II preinitiation complex assembly"/>
    <property type="evidence" value="ECO:0000318"/>
    <property type="project" value="GO_Central"/>
</dbReference>
<dbReference type="FunFam" id="1.20.920.10:FF:000043">
    <property type="entry name" value="Transcription initiation factor TFIID subunit 1"/>
    <property type="match status" value="1"/>
</dbReference>
<dbReference type="FunFam" id="3.10.20.90:FF:000223">
    <property type="entry name" value="Transcription initiation factor TFIID subunit 1"/>
    <property type="match status" value="1"/>
</dbReference>
<dbReference type="Gene3D" id="1.20.920.10">
    <property type="entry name" value="Bromodomain-like"/>
    <property type="match status" value="1"/>
</dbReference>
<dbReference type="Gene3D" id="3.10.20.90">
    <property type="entry name" value="Phosphatidylinositol 3-kinase Catalytic Subunit, Chain A, domain 1"/>
    <property type="match status" value="1"/>
</dbReference>
<dbReference type="InterPro" id="IPR001487">
    <property type="entry name" value="Bromodomain"/>
</dbReference>
<dbReference type="InterPro" id="IPR036427">
    <property type="entry name" value="Bromodomain-like_sf"/>
</dbReference>
<dbReference type="InterPro" id="IPR018359">
    <property type="entry name" value="Bromodomain_CS"/>
</dbReference>
<dbReference type="InterPro" id="IPR040240">
    <property type="entry name" value="TAF1"/>
</dbReference>
<dbReference type="InterPro" id="IPR022591">
    <property type="entry name" value="TAF1_HAT_dom"/>
</dbReference>
<dbReference type="InterPro" id="IPR009067">
    <property type="entry name" value="TAF_II_230-bd"/>
</dbReference>
<dbReference type="InterPro" id="IPR036741">
    <property type="entry name" value="TAFII-230_TBP-bd_sf"/>
</dbReference>
<dbReference type="InterPro" id="IPR000626">
    <property type="entry name" value="Ubiquitin-like_dom"/>
</dbReference>
<dbReference type="InterPro" id="IPR029071">
    <property type="entry name" value="Ubiquitin-like_domsf"/>
</dbReference>
<dbReference type="PANTHER" id="PTHR13900">
    <property type="entry name" value="TRANSCRIPTION INITIATION FACTOR TFIID"/>
    <property type="match status" value="1"/>
</dbReference>
<dbReference type="PANTHER" id="PTHR13900:SF0">
    <property type="entry name" value="TRANSCRIPTION INITIATION FACTOR TFIID SUBUNIT 1"/>
    <property type="match status" value="1"/>
</dbReference>
<dbReference type="Pfam" id="PF00439">
    <property type="entry name" value="Bromodomain"/>
    <property type="match status" value="1"/>
</dbReference>
<dbReference type="Pfam" id="PF12157">
    <property type="entry name" value="DUF3591"/>
    <property type="match status" value="1"/>
</dbReference>
<dbReference type="Pfam" id="PF09247">
    <property type="entry name" value="TBP-binding"/>
    <property type="match status" value="1"/>
</dbReference>
<dbReference type="Pfam" id="PF00240">
    <property type="entry name" value="ubiquitin"/>
    <property type="match status" value="1"/>
</dbReference>
<dbReference type="PRINTS" id="PR00503">
    <property type="entry name" value="BROMODOMAIN"/>
</dbReference>
<dbReference type="SMART" id="SM00297">
    <property type="entry name" value="BROMO"/>
    <property type="match status" value="1"/>
</dbReference>
<dbReference type="SMART" id="SM00213">
    <property type="entry name" value="UBQ"/>
    <property type="match status" value="1"/>
</dbReference>
<dbReference type="SUPFAM" id="SSF47370">
    <property type="entry name" value="Bromodomain"/>
    <property type="match status" value="1"/>
</dbReference>
<dbReference type="SUPFAM" id="SSF47055">
    <property type="entry name" value="TAF(II)230 TBP-binding fragment"/>
    <property type="match status" value="1"/>
</dbReference>
<dbReference type="SUPFAM" id="SSF54236">
    <property type="entry name" value="Ubiquitin-like"/>
    <property type="match status" value="1"/>
</dbReference>
<dbReference type="PROSITE" id="PS00633">
    <property type="entry name" value="BROMODOMAIN_1"/>
    <property type="match status" value="1"/>
</dbReference>
<dbReference type="PROSITE" id="PS50014">
    <property type="entry name" value="BROMODOMAIN_2"/>
    <property type="match status" value="1"/>
</dbReference>
<dbReference type="PROSITE" id="PS50053">
    <property type="entry name" value="UBIQUITIN_2"/>
    <property type="match status" value="1"/>
</dbReference>